<accession>B7LR50</accession>
<evidence type="ECO:0000255" key="1">
    <source>
        <dbReference type="HAMAP-Rule" id="MF_01454"/>
    </source>
</evidence>
<evidence type="ECO:0000255" key="2">
    <source>
        <dbReference type="PROSITE-ProRule" id="PRU01231"/>
    </source>
</evidence>
<evidence type="ECO:0000256" key="3">
    <source>
        <dbReference type="SAM" id="MobiDB-lite"/>
    </source>
</evidence>
<organism>
    <name type="scientific">Escherichia fergusonii (strain ATCC 35469 / DSM 13698 / CCUG 18766 / IAM 14443 / JCM 21226 / LMG 7866 / NBRC 102419 / NCTC 12128 / CDC 0568-73)</name>
    <dbReference type="NCBI Taxonomy" id="585054"/>
    <lineage>
        <taxon>Bacteria</taxon>
        <taxon>Pseudomonadati</taxon>
        <taxon>Pseudomonadota</taxon>
        <taxon>Gammaproteobacteria</taxon>
        <taxon>Enterobacterales</taxon>
        <taxon>Enterobacteriaceae</taxon>
        <taxon>Escherichia</taxon>
    </lineage>
</organism>
<reference key="1">
    <citation type="journal article" date="2009" name="PLoS Genet.">
        <title>Organised genome dynamics in the Escherichia coli species results in highly diverse adaptive paths.</title>
        <authorList>
            <person name="Touchon M."/>
            <person name="Hoede C."/>
            <person name="Tenaillon O."/>
            <person name="Barbe V."/>
            <person name="Baeriswyl S."/>
            <person name="Bidet P."/>
            <person name="Bingen E."/>
            <person name="Bonacorsi S."/>
            <person name="Bouchier C."/>
            <person name="Bouvet O."/>
            <person name="Calteau A."/>
            <person name="Chiapello H."/>
            <person name="Clermont O."/>
            <person name="Cruveiller S."/>
            <person name="Danchin A."/>
            <person name="Diard M."/>
            <person name="Dossat C."/>
            <person name="Karoui M.E."/>
            <person name="Frapy E."/>
            <person name="Garry L."/>
            <person name="Ghigo J.M."/>
            <person name="Gilles A.M."/>
            <person name="Johnson J."/>
            <person name="Le Bouguenec C."/>
            <person name="Lescat M."/>
            <person name="Mangenot S."/>
            <person name="Martinez-Jehanne V."/>
            <person name="Matic I."/>
            <person name="Nassif X."/>
            <person name="Oztas S."/>
            <person name="Petit M.A."/>
            <person name="Pichon C."/>
            <person name="Rouy Z."/>
            <person name="Ruf C.S."/>
            <person name="Schneider D."/>
            <person name="Tourret J."/>
            <person name="Vacherie B."/>
            <person name="Vallenet D."/>
            <person name="Medigue C."/>
            <person name="Rocha E.P.C."/>
            <person name="Denamur E."/>
        </authorList>
    </citation>
    <scope>NUCLEOTIDE SEQUENCE [LARGE SCALE GENOMIC DNA]</scope>
    <source>
        <strain>ATCC 35469 / DSM 13698 / BCRC 15582 / CCUG 18766 / IAM 14443 / JCM 21226 / LMG 7866 / NBRC 102419 / NCTC 12128 / CDC 0568-73</strain>
    </source>
</reference>
<feature type="chain" id="PRO_0000385929" description="GTPase Obg">
    <location>
        <begin position="1"/>
        <end position="390"/>
    </location>
</feature>
<feature type="domain" description="Obg" evidence="2">
    <location>
        <begin position="1"/>
        <end position="159"/>
    </location>
</feature>
<feature type="domain" description="OBG-type G" evidence="1">
    <location>
        <begin position="160"/>
        <end position="333"/>
    </location>
</feature>
<feature type="region of interest" description="Disordered" evidence="3">
    <location>
        <begin position="127"/>
        <end position="147"/>
    </location>
</feature>
<feature type="compositionally biased region" description="Polar residues" evidence="3">
    <location>
        <begin position="129"/>
        <end position="145"/>
    </location>
</feature>
<feature type="binding site" evidence="1">
    <location>
        <begin position="166"/>
        <end position="173"/>
    </location>
    <ligand>
        <name>GTP</name>
        <dbReference type="ChEBI" id="CHEBI:37565"/>
    </ligand>
</feature>
<feature type="binding site" evidence="1">
    <location>
        <position position="173"/>
    </location>
    <ligand>
        <name>Mg(2+)</name>
        <dbReference type="ChEBI" id="CHEBI:18420"/>
    </ligand>
</feature>
<feature type="binding site" evidence="1">
    <location>
        <begin position="191"/>
        <end position="195"/>
    </location>
    <ligand>
        <name>GTP</name>
        <dbReference type="ChEBI" id="CHEBI:37565"/>
    </ligand>
</feature>
<feature type="binding site" evidence="1">
    <location>
        <position position="193"/>
    </location>
    <ligand>
        <name>Mg(2+)</name>
        <dbReference type="ChEBI" id="CHEBI:18420"/>
    </ligand>
</feature>
<feature type="binding site" evidence="1">
    <location>
        <begin position="213"/>
        <end position="216"/>
    </location>
    <ligand>
        <name>GTP</name>
        <dbReference type="ChEBI" id="CHEBI:37565"/>
    </ligand>
</feature>
<feature type="binding site" evidence="1">
    <location>
        <begin position="283"/>
        <end position="286"/>
    </location>
    <ligand>
        <name>GTP</name>
        <dbReference type="ChEBI" id="CHEBI:37565"/>
    </ligand>
</feature>
<feature type="binding site" evidence="1">
    <location>
        <begin position="314"/>
        <end position="316"/>
    </location>
    <ligand>
        <name>GTP</name>
        <dbReference type="ChEBI" id="CHEBI:37565"/>
    </ligand>
</feature>
<sequence length="390" mass="43228">MKFVDEASILVVAGDGGNGCVSFRREKYIPKGGPDGGDGGDGGDVWMEADENLNTLIDYRFEKSFRAERGQNGASRDCTGKRGKDVTIKVPVGTRVIDQGTGETMGDMTKHGQRLLVAKGGWHGLGNTRFKSSVNRTPRQKTNGTPGDKRELLLELMLLADVGMLGMPNAGKSTFIRAVSAAKPKVADYPFTTLVPSLGVVRMDNEKSFVVADIPGLIEGAAEGAGLGIRFLKHLERCRVLLHLIDIDPIDGTDPVENARIIISELEKYSQDLAAKPRWLVFNKIDLLDKAEAEEKAKAIAEALGWEDKYYLISAASGLGVKDLCWDVMTFIIENPVVQAEEAKQPEKVEFMWDDYHRQQLEEIAEEDDEDWDDDWDEDDEEGVEFIYKR</sequence>
<protein>
    <recommendedName>
        <fullName evidence="1">GTPase Obg</fullName>
        <ecNumber evidence="1">3.6.5.-</ecNumber>
    </recommendedName>
    <alternativeName>
        <fullName evidence="1">GTP-binding protein Obg</fullName>
    </alternativeName>
</protein>
<gene>
    <name evidence="1" type="primary">obg</name>
    <name type="ordered locus">EFER_3160</name>
</gene>
<keyword id="KW-0963">Cytoplasm</keyword>
<keyword id="KW-0342">GTP-binding</keyword>
<keyword id="KW-0378">Hydrolase</keyword>
<keyword id="KW-0460">Magnesium</keyword>
<keyword id="KW-0479">Metal-binding</keyword>
<keyword id="KW-0547">Nucleotide-binding</keyword>
<dbReference type="EC" id="3.6.5.-" evidence="1"/>
<dbReference type="EMBL" id="CU928158">
    <property type="protein sequence ID" value="CAQ90653.1"/>
    <property type="molecule type" value="Genomic_DNA"/>
</dbReference>
<dbReference type="SMR" id="B7LR50"/>
<dbReference type="KEGG" id="efe:EFER_3160"/>
<dbReference type="HOGENOM" id="CLU_011747_2_0_6"/>
<dbReference type="OrthoDB" id="9807318at2"/>
<dbReference type="Proteomes" id="UP000000745">
    <property type="component" value="Chromosome"/>
</dbReference>
<dbReference type="GO" id="GO:0005737">
    <property type="term" value="C:cytoplasm"/>
    <property type="evidence" value="ECO:0007669"/>
    <property type="project" value="UniProtKB-SubCell"/>
</dbReference>
<dbReference type="GO" id="GO:0005525">
    <property type="term" value="F:GTP binding"/>
    <property type="evidence" value="ECO:0007669"/>
    <property type="project" value="UniProtKB-UniRule"/>
</dbReference>
<dbReference type="GO" id="GO:0003924">
    <property type="term" value="F:GTPase activity"/>
    <property type="evidence" value="ECO:0007669"/>
    <property type="project" value="UniProtKB-UniRule"/>
</dbReference>
<dbReference type="GO" id="GO:0000287">
    <property type="term" value="F:magnesium ion binding"/>
    <property type="evidence" value="ECO:0007669"/>
    <property type="project" value="InterPro"/>
</dbReference>
<dbReference type="GO" id="GO:0042254">
    <property type="term" value="P:ribosome biogenesis"/>
    <property type="evidence" value="ECO:0007669"/>
    <property type="project" value="UniProtKB-UniRule"/>
</dbReference>
<dbReference type="CDD" id="cd01898">
    <property type="entry name" value="Obg"/>
    <property type="match status" value="1"/>
</dbReference>
<dbReference type="FunFam" id="2.70.210.12:FF:000001">
    <property type="entry name" value="GTPase Obg"/>
    <property type="match status" value="1"/>
</dbReference>
<dbReference type="FunFam" id="3.40.50.300:FF:000185">
    <property type="entry name" value="GTPase Obg"/>
    <property type="match status" value="1"/>
</dbReference>
<dbReference type="Gene3D" id="2.70.210.12">
    <property type="entry name" value="GTP1/OBG domain"/>
    <property type="match status" value="1"/>
</dbReference>
<dbReference type="Gene3D" id="3.40.50.300">
    <property type="entry name" value="P-loop containing nucleotide triphosphate hydrolases"/>
    <property type="match status" value="1"/>
</dbReference>
<dbReference type="HAMAP" id="MF_01454">
    <property type="entry name" value="GTPase_Obg"/>
    <property type="match status" value="1"/>
</dbReference>
<dbReference type="InterPro" id="IPR031167">
    <property type="entry name" value="G_OBG"/>
</dbReference>
<dbReference type="InterPro" id="IPR006073">
    <property type="entry name" value="GTP-bd"/>
</dbReference>
<dbReference type="InterPro" id="IPR014100">
    <property type="entry name" value="GTP-bd_Obg/CgtA"/>
</dbReference>
<dbReference type="InterPro" id="IPR006074">
    <property type="entry name" value="GTP1-OBG_CS"/>
</dbReference>
<dbReference type="InterPro" id="IPR006169">
    <property type="entry name" value="GTP1_OBG_dom"/>
</dbReference>
<dbReference type="InterPro" id="IPR036726">
    <property type="entry name" value="GTP1_OBG_dom_sf"/>
</dbReference>
<dbReference type="InterPro" id="IPR045086">
    <property type="entry name" value="OBG_GTPase"/>
</dbReference>
<dbReference type="InterPro" id="IPR027417">
    <property type="entry name" value="P-loop_NTPase"/>
</dbReference>
<dbReference type="NCBIfam" id="TIGR02729">
    <property type="entry name" value="Obg_CgtA"/>
    <property type="match status" value="1"/>
</dbReference>
<dbReference type="NCBIfam" id="NF008955">
    <property type="entry name" value="PRK12297.1"/>
    <property type="match status" value="1"/>
</dbReference>
<dbReference type="NCBIfam" id="NF008956">
    <property type="entry name" value="PRK12299.1"/>
    <property type="match status" value="1"/>
</dbReference>
<dbReference type="PANTHER" id="PTHR11702">
    <property type="entry name" value="DEVELOPMENTALLY REGULATED GTP-BINDING PROTEIN-RELATED"/>
    <property type="match status" value="1"/>
</dbReference>
<dbReference type="PANTHER" id="PTHR11702:SF31">
    <property type="entry name" value="MITOCHONDRIAL RIBOSOME-ASSOCIATED GTPASE 2"/>
    <property type="match status" value="1"/>
</dbReference>
<dbReference type="Pfam" id="PF01018">
    <property type="entry name" value="GTP1_OBG"/>
    <property type="match status" value="1"/>
</dbReference>
<dbReference type="Pfam" id="PF01926">
    <property type="entry name" value="MMR_HSR1"/>
    <property type="match status" value="1"/>
</dbReference>
<dbReference type="PIRSF" id="PIRSF002401">
    <property type="entry name" value="GTP_bd_Obg/CgtA"/>
    <property type="match status" value="1"/>
</dbReference>
<dbReference type="PRINTS" id="PR00326">
    <property type="entry name" value="GTP1OBG"/>
</dbReference>
<dbReference type="SUPFAM" id="SSF82051">
    <property type="entry name" value="Obg GTP-binding protein N-terminal domain"/>
    <property type="match status" value="1"/>
</dbReference>
<dbReference type="SUPFAM" id="SSF52540">
    <property type="entry name" value="P-loop containing nucleoside triphosphate hydrolases"/>
    <property type="match status" value="1"/>
</dbReference>
<dbReference type="PROSITE" id="PS51710">
    <property type="entry name" value="G_OBG"/>
    <property type="match status" value="1"/>
</dbReference>
<dbReference type="PROSITE" id="PS00905">
    <property type="entry name" value="GTP1_OBG"/>
    <property type="match status" value="1"/>
</dbReference>
<dbReference type="PROSITE" id="PS51883">
    <property type="entry name" value="OBG"/>
    <property type="match status" value="1"/>
</dbReference>
<comment type="function">
    <text evidence="1">An essential GTPase which binds GTP, GDP and possibly (p)ppGpp with moderate affinity, with high nucleotide exchange rates and a fairly low GTP hydrolysis rate. Plays a role in control of the cell cycle, stress response, ribosome biogenesis and in those bacteria that undergo differentiation, in morphogenesis control.</text>
</comment>
<comment type="cofactor">
    <cofactor evidence="1">
        <name>Mg(2+)</name>
        <dbReference type="ChEBI" id="CHEBI:18420"/>
    </cofactor>
</comment>
<comment type="subunit">
    <text evidence="1">Monomer.</text>
</comment>
<comment type="subcellular location">
    <subcellularLocation>
        <location evidence="1">Cytoplasm</location>
    </subcellularLocation>
</comment>
<comment type="similarity">
    <text evidence="1">Belongs to the TRAFAC class OBG-HflX-like GTPase superfamily. OBG GTPase family.</text>
</comment>
<proteinExistence type="inferred from homology"/>
<name>OBG_ESCF3</name>